<reference key="1">
    <citation type="journal article" date="2000" name="Nature">
        <title>Sequence and analysis of chromosome 3 of the plant Arabidopsis thaliana.</title>
        <authorList>
            <person name="Salanoubat M."/>
            <person name="Lemcke K."/>
            <person name="Rieger M."/>
            <person name="Ansorge W."/>
            <person name="Unseld M."/>
            <person name="Fartmann B."/>
            <person name="Valle G."/>
            <person name="Bloecker H."/>
            <person name="Perez-Alonso M."/>
            <person name="Obermaier B."/>
            <person name="Delseny M."/>
            <person name="Boutry M."/>
            <person name="Grivell L.A."/>
            <person name="Mache R."/>
            <person name="Puigdomenech P."/>
            <person name="De Simone V."/>
            <person name="Choisne N."/>
            <person name="Artiguenave F."/>
            <person name="Robert C."/>
            <person name="Brottier P."/>
            <person name="Wincker P."/>
            <person name="Cattolico L."/>
            <person name="Weissenbach J."/>
            <person name="Saurin W."/>
            <person name="Quetier F."/>
            <person name="Schaefer M."/>
            <person name="Mueller-Auer S."/>
            <person name="Gabel C."/>
            <person name="Fuchs M."/>
            <person name="Benes V."/>
            <person name="Wurmbach E."/>
            <person name="Drzonek H."/>
            <person name="Erfle H."/>
            <person name="Jordan N."/>
            <person name="Bangert S."/>
            <person name="Wiedelmann R."/>
            <person name="Kranz H."/>
            <person name="Voss H."/>
            <person name="Holland R."/>
            <person name="Brandt P."/>
            <person name="Nyakatura G."/>
            <person name="Vezzi A."/>
            <person name="D'Angelo M."/>
            <person name="Pallavicini A."/>
            <person name="Toppo S."/>
            <person name="Simionati B."/>
            <person name="Conrad A."/>
            <person name="Hornischer K."/>
            <person name="Kauer G."/>
            <person name="Loehnert T.-H."/>
            <person name="Nordsiek G."/>
            <person name="Reichelt J."/>
            <person name="Scharfe M."/>
            <person name="Schoen O."/>
            <person name="Bargues M."/>
            <person name="Terol J."/>
            <person name="Climent J."/>
            <person name="Navarro P."/>
            <person name="Collado C."/>
            <person name="Perez-Perez A."/>
            <person name="Ottenwaelder B."/>
            <person name="Duchemin D."/>
            <person name="Cooke R."/>
            <person name="Laudie M."/>
            <person name="Berger-Llauro C."/>
            <person name="Purnelle B."/>
            <person name="Masuy D."/>
            <person name="de Haan M."/>
            <person name="Maarse A.C."/>
            <person name="Alcaraz J.-P."/>
            <person name="Cottet A."/>
            <person name="Casacuberta E."/>
            <person name="Monfort A."/>
            <person name="Argiriou A."/>
            <person name="Flores M."/>
            <person name="Liguori R."/>
            <person name="Vitale D."/>
            <person name="Mannhaupt G."/>
            <person name="Haase D."/>
            <person name="Schoof H."/>
            <person name="Rudd S."/>
            <person name="Zaccaria P."/>
            <person name="Mewes H.-W."/>
            <person name="Mayer K.F.X."/>
            <person name="Kaul S."/>
            <person name="Town C.D."/>
            <person name="Koo H.L."/>
            <person name="Tallon L.J."/>
            <person name="Jenkins J."/>
            <person name="Rooney T."/>
            <person name="Rizzo M."/>
            <person name="Walts A."/>
            <person name="Utterback T."/>
            <person name="Fujii C.Y."/>
            <person name="Shea T.P."/>
            <person name="Creasy T.H."/>
            <person name="Haas B."/>
            <person name="Maiti R."/>
            <person name="Wu D."/>
            <person name="Peterson J."/>
            <person name="Van Aken S."/>
            <person name="Pai G."/>
            <person name="Militscher J."/>
            <person name="Sellers P."/>
            <person name="Gill J.E."/>
            <person name="Feldblyum T.V."/>
            <person name="Preuss D."/>
            <person name="Lin X."/>
            <person name="Nierman W.C."/>
            <person name="Salzberg S.L."/>
            <person name="White O."/>
            <person name="Venter J.C."/>
            <person name="Fraser C.M."/>
            <person name="Kaneko T."/>
            <person name="Nakamura Y."/>
            <person name="Sato S."/>
            <person name="Kato T."/>
            <person name="Asamizu E."/>
            <person name="Sasamoto S."/>
            <person name="Kimura T."/>
            <person name="Idesawa K."/>
            <person name="Kawashima K."/>
            <person name="Kishida Y."/>
            <person name="Kiyokawa C."/>
            <person name="Kohara M."/>
            <person name="Matsumoto M."/>
            <person name="Matsuno A."/>
            <person name="Muraki A."/>
            <person name="Nakayama S."/>
            <person name="Nakazaki N."/>
            <person name="Shinpo S."/>
            <person name="Takeuchi C."/>
            <person name="Wada T."/>
            <person name="Watanabe A."/>
            <person name="Yamada M."/>
            <person name="Yasuda M."/>
            <person name="Tabata S."/>
        </authorList>
    </citation>
    <scope>NUCLEOTIDE SEQUENCE [LARGE SCALE GENOMIC DNA]</scope>
    <source>
        <strain>cv. Columbia</strain>
    </source>
</reference>
<reference key="2">
    <citation type="journal article" date="2017" name="Plant J.">
        <title>Araport11: a complete reannotation of the Arabidopsis thaliana reference genome.</title>
        <authorList>
            <person name="Cheng C.Y."/>
            <person name="Krishnakumar V."/>
            <person name="Chan A.P."/>
            <person name="Thibaud-Nissen F."/>
            <person name="Schobel S."/>
            <person name="Town C.D."/>
        </authorList>
    </citation>
    <scope>GENOME REANNOTATION</scope>
    <source>
        <strain>cv. Columbia</strain>
    </source>
</reference>
<reference key="3">
    <citation type="journal article" date="2003" name="Science">
        <title>Empirical analysis of transcriptional activity in the Arabidopsis genome.</title>
        <authorList>
            <person name="Yamada K."/>
            <person name="Lim J."/>
            <person name="Dale J.M."/>
            <person name="Chen H."/>
            <person name="Shinn P."/>
            <person name="Palm C.J."/>
            <person name="Southwick A.M."/>
            <person name="Wu H.C."/>
            <person name="Kim C.J."/>
            <person name="Nguyen M."/>
            <person name="Pham P.K."/>
            <person name="Cheuk R.F."/>
            <person name="Karlin-Newmann G."/>
            <person name="Liu S.X."/>
            <person name="Lam B."/>
            <person name="Sakano H."/>
            <person name="Wu T."/>
            <person name="Yu G."/>
            <person name="Miranda M."/>
            <person name="Quach H.L."/>
            <person name="Tripp M."/>
            <person name="Chang C.H."/>
            <person name="Lee J.M."/>
            <person name="Toriumi M.J."/>
            <person name="Chan M.M."/>
            <person name="Tang C.C."/>
            <person name="Onodera C.S."/>
            <person name="Deng J.M."/>
            <person name="Akiyama K."/>
            <person name="Ansari Y."/>
            <person name="Arakawa T."/>
            <person name="Banh J."/>
            <person name="Banno F."/>
            <person name="Bowser L."/>
            <person name="Brooks S.Y."/>
            <person name="Carninci P."/>
            <person name="Chao Q."/>
            <person name="Choy N."/>
            <person name="Enju A."/>
            <person name="Goldsmith A.D."/>
            <person name="Gurjal M."/>
            <person name="Hansen N.F."/>
            <person name="Hayashizaki Y."/>
            <person name="Johnson-Hopson C."/>
            <person name="Hsuan V.W."/>
            <person name="Iida K."/>
            <person name="Karnes M."/>
            <person name="Khan S."/>
            <person name="Koesema E."/>
            <person name="Ishida J."/>
            <person name="Jiang P.X."/>
            <person name="Jones T."/>
            <person name="Kawai J."/>
            <person name="Kamiya A."/>
            <person name="Meyers C."/>
            <person name="Nakajima M."/>
            <person name="Narusaka M."/>
            <person name="Seki M."/>
            <person name="Sakurai T."/>
            <person name="Satou M."/>
            <person name="Tamse R."/>
            <person name="Vaysberg M."/>
            <person name="Wallender E.K."/>
            <person name="Wong C."/>
            <person name="Yamamura Y."/>
            <person name="Yuan S."/>
            <person name="Shinozaki K."/>
            <person name="Davis R.W."/>
            <person name="Theologis A."/>
            <person name="Ecker J.R."/>
        </authorList>
    </citation>
    <scope>NUCLEOTIDE SEQUENCE [LARGE SCALE MRNA]</scope>
    <source>
        <strain>cv. Columbia</strain>
    </source>
</reference>
<reference key="4">
    <citation type="submission" date="2002-03" db="EMBL/GenBank/DDBJ databases">
        <title>Full-length cDNA from Arabidopsis thaliana.</title>
        <authorList>
            <person name="Brover V.V."/>
            <person name="Troukhan M.E."/>
            <person name="Alexandrov N.A."/>
            <person name="Lu Y.-P."/>
            <person name="Flavell R.B."/>
            <person name="Feldmann K.A."/>
        </authorList>
    </citation>
    <scope>NUCLEOTIDE SEQUENCE [LARGE SCALE MRNA]</scope>
</reference>
<comment type="function">
    <text evidence="1">Accessory subunit of the mitochondrial membrane respiratory chain NADH dehydrogenase (Complex I), that is believed not to be involved in catalysis. Complex I functions in the transfer of electrons from NADH to the respiratory chain. The immediate electron acceptor for the enzyme is believed to be ubiquinone (By similarity).</text>
</comment>
<comment type="subunit">
    <text>Complex I is composed of at least 49 different subunits. This is a component of the iron-sulfur (IP) fragment of the enzyme.</text>
</comment>
<comment type="subcellular location">
    <subcellularLocation>
        <location evidence="1">Mitochondrion</location>
    </subcellularLocation>
    <subcellularLocation>
        <location evidence="1">Mitochondrion inner membrane</location>
        <topology evidence="1">Peripheral membrane protein</topology>
    </subcellularLocation>
    <subcellularLocation>
        <location evidence="4">Mitochondrion intermembrane space</location>
    </subcellularLocation>
</comment>
<comment type="domain">
    <text evidence="1">Contains two C-X9-C motifs that are predicted to form a helix-coil-helix structure, permitting the formation of intramolecular disulfide bonds.</text>
</comment>
<comment type="similarity">
    <text evidence="4">Belongs to the complex I NDUFS5 subunit family.</text>
</comment>
<evidence type="ECO:0000250" key="1"/>
<evidence type="ECO:0000255" key="2">
    <source>
        <dbReference type="PROSITE-ProRule" id="PRU01150"/>
    </source>
</evidence>
<evidence type="ECO:0000256" key="3">
    <source>
        <dbReference type="SAM" id="MobiDB-lite"/>
    </source>
</evidence>
<evidence type="ECO:0000305" key="4"/>
<evidence type="ECO:0007829" key="5">
    <source>
        <dbReference type="PDB" id="8BEF"/>
    </source>
</evidence>
<feature type="chain" id="PRO_0000410793" description="NADH dehydrogenase [ubiquinone] iron-sulfur protein 5-B">
    <location>
        <begin position="1"/>
        <end position="83"/>
    </location>
</feature>
<feature type="domain" description="CHCH" evidence="2">
    <location>
        <begin position="11"/>
        <end position="52"/>
    </location>
</feature>
<feature type="region of interest" description="Disordered" evidence="3">
    <location>
        <begin position="62"/>
        <end position="83"/>
    </location>
</feature>
<feature type="short sequence motif" description="Cx9C motif 1" evidence="2">
    <location>
        <begin position="14"/>
        <end position="24"/>
    </location>
</feature>
<feature type="short sequence motif" description="Cx9C motif 2" evidence="2">
    <location>
        <begin position="34"/>
        <end position="44"/>
    </location>
</feature>
<feature type="disulfide bond" evidence="2">
    <location>
        <begin position="14"/>
        <end position="44"/>
    </location>
</feature>
<feature type="disulfide bond" evidence="2">
    <location>
        <begin position="24"/>
        <end position="34"/>
    </location>
</feature>
<feature type="sequence conflict" description="In Ref. 4; AAM65996." evidence="4" ref="4">
    <original>G</original>
    <variation>E</variation>
    <location>
        <position position="78"/>
    </location>
</feature>
<feature type="strand" evidence="5">
    <location>
        <begin position="9"/>
        <end position="11"/>
    </location>
</feature>
<feature type="helix" evidence="5">
    <location>
        <begin position="15"/>
        <end position="25"/>
    </location>
</feature>
<feature type="helix" evidence="5">
    <location>
        <begin position="31"/>
        <end position="34"/>
    </location>
</feature>
<feature type="helix" evidence="5">
    <location>
        <begin position="35"/>
        <end position="46"/>
    </location>
</feature>
<feature type="helix" evidence="5">
    <location>
        <begin position="48"/>
        <end position="63"/>
    </location>
</feature>
<sequence length="83" mass="9893">MASGWGITGNKGRCYDFWMDFSECMSHCREPKDCTLLREDYLECLHHSKEFQRRNRIYKEEQRKLRAASRKGEETGDGTHTHH</sequence>
<accession>Q9LZI6</accession>
<accession>Q8L9F7</accession>
<dbReference type="EMBL" id="AL162651">
    <property type="protein sequence ID" value="CAB83129.1"/>
    <property type="molecule type" value="Genomic_DNA"/>
</dbReference>
<dbReference type="EMBL" id="CP002686">
    <property type="protein sequence ID" value="AEE80392.1"/>
    <property type="molecule type" value="Genomic_DNA"/>
</dbReference>
<dbReference type="EMBL" id="AY062842">
    <property type="protein sequence ID" value="AAL32920.1"/>
    <property type="molecule type" value="mRNA"/>
</dbReference>
<dbReference type="EMBL" id="AY114576">
    <property type="protein sequence ID" value="AAM47895.1"/>
    <property type="molecule type" value="mRNA"/>
</dbReference>
<dbReference type="EMBL" id="AY088460">
    <property type="protein sequence ID" value="AAM65996.1"/>
    <property type="molecule type" value="mRNA"/>
</dbReference>
<dbReference type="PIR" id="T48068">
    <property type="entry name" value="T48068"/>
</dbReference>
<dbReference type="RefSeq" id="NP_191838.1">
    <property type="nucleotide sequence ID" value="NM_116144.4"/>
</dbReference>
<dbReference type="PDB" id="7A23">
    <property type="method" value="EM"/>
    <property type="resolution" value="3.70 A"/>
    <property type="chains" value="j=1-83"/>
</dbReference>
<dbReference type="PDB" id="7A24">
    <property type="method" value="EM"/>
    <property type="resolution" value="3.80 A"/>
    <property type="chains" value="j=1-83"/>
</dbReference>
<dbReference type="PDB" id="7AQQ">
    <property type="method" value="EM"/>
    <property type="resolution" value="3.06 A"/>
    <property type="chains" value="e=1-83"/>
</dbReference>
<dbReference type="PDB" id="7AR8">
    <property type="method" value="EM"/>
    <property type="resolution" value="3.53 A"/>
    <property type="chains" value="e=1-83"/>
</dbReference>
<dbReference type="PDB" id="7ARB">
    <property type="method" value="EM"/>
    <property type="resolution" value="3.41 A"/>
    <property type="chains" value="e=1-83"/>
</dbReference>
<dbReference type="PDB" id="8BEF">
    <property type="method" value="EM"/>
    <property type="resolution" value="2.13 A"/>
    <property type="chains" value="e=1-83"/>
</dbReference>
<dbReference type="PDB" id="8BPX">
    <property type="method" value="EM"/>
    <property type="resolution" value="2.09 A"/>
    <property type="chains" value="e=1-83"/>
</dbReference>
<dbReference type="PDB" id="8BQ5">
    <property type="method" value="EM"/>
    <property type="resolution" value="2.73 A"/>
    <property type="chains" value="e=1-83"/>
</dbReference>
<dbReference type="PDB" id="8BQ6">
    <property type="method" value="EM"/>
    <property type="resolution" value="2.80 A"/>
    <property type="chains" value="e=1-83"/>
</dbReference>
<dbReference type="PDBsum" id="7A23"/>
<dbReference type="PDBsum" id="7A24"/>
<dbReference type="PDBsum" id="7AQQ"/>
<dbReference type="PDBsum" id="7AR8"/>
<dbReference type="PDBsum" id="7ARB"/>
<dbReference type="PDBsum" id="8BEF"/>
<dbReference type="PDBsum" id="8BPX"/>
<dbReference type="PDBsum" id="8BQ5"/>
<dbReference type="PDBsum" id="8BQ6"/>
<dbReference type="EMDB" id="EMD-11872"/>
<dbReference type="EMDB" id="EMD-11876"/>
<dbReference type="EMDB" id="EMD-11878"/>
<dbReference type="EMDB" id="EMD-16000"/>
<dbReference type="EMDB" id="EMD-16168"/>
<dbReference type="EMDB" id="EMD-16171"/>
<dbReference type="EMDB" id="EMD-16172"/>
<dbReference type="SMR" id="Q9LZI6"/>
<dbReference type="BioGRID" id="10768">
    <property type="interactions" value="5"/>
</dbReference>
<dbReference type="FunCoup" id="Q9LZI6">
    <property type="interactions" value="1019"/>
</dbReference>
<dbReference type="IntAct" id="Q9LZI6">
    <property type="interactions" value="5"/>
</dbReference>
<dbReference type="STRING" id="3702.Q9LZI6"/>
<dbReference type="TCDB" id="3.D.1.6.3">
    <property type="family name" value="the h+ or na+-translocating nadh dehydrogenase (ndh) family"/>
</dbReference>
<dbReference type="PaxDb" id="3702-AT3G62790.1"/>
<dbReference type="ProteomicsDB" id="251186"/>
<dbReference type="EnsemblPlants" id="AT3G62790.1">
    <property type="protein sequence ID" value="AT3G62790.1"/>
    <property type="gene ID" value="AT3G62790"/>
</dbReference>
<dbReference type="GeneID" id="825454"/>
<dbReference type="Gramene" id="AT3G62790.1">
    <property type="protein sequence ID" value="AT3G62790.1"/>
    <property type="gene ID" value="AT3G62790"/>
</dbReference>
<dbReference type="KEGG" id="ath:AT3G62790"/>
<dbReference type="Araport" id="AT3G62790"/>
<dbReference type="TAIR" id="AT3G62790"/>
<dbReference type="eggNOG" id="ENOG502S4B1">
    <property type="taxonomic scope" value="Eukaryota"/>
</dbReference>
<dbReference type="HOGENOM" id="CLU_162182_2_0_1"/>
<dbReference type="InParanoid" id="Q9LZI6"/>
<dbReference type="OMA" id="SRCFAYW"/>
<dbReference type="PhylomeDB" id="Q9LZI6"/>
<dbReference type="PRO" id="PR:Q9LZI6"/>
<dbReference type="Proteomes" id="UP000006548">
    <property type="component" value="Chromosome 3"/>
</dbReference>
<dbReference type="ExpressionAtlas" id="Q9LZI6">
    <property type="expression patterns" value="baseline and differential"/>
</dbReference>
<dbReference type="GO" id="GO:0005829">
    <property type="term" value="C:cytosol"/>
    <property type="evidence" value="ECO:0007005"/>
    <property type="project" value="TAIR"/>
</dbReference>
<dbReference type="GO" id="GO:0005743">
    <property type="term" value="C:mitochondrial inner membrane"/>
    <property type="evidence" value="ECO:0007669"/>
    <property type="project" value="UniProtKB-SubCell"/>
</dbReference>
<dbReference type="GO" id="GO:0005758">
    <property type="term" value="C:mitochondrial intermembrane space"/>
    <property type="evidence" value="ECO:0007669"/>
    <property type="project" value="UniProtKB-SubCell"/>
</dbReference>
<dbReference type="GO" id="GO:0005739">
    <property type="term" value="C:mitochondrion"/>
    <property type="evidence" value="ECO:0007005"/>
    <property type="project" value="TAIR"/>
</dbReference>
<dbReference type="CDD" id="cd24141">
    <property type="entry name" value="NDUFS5-like"/>
    <property type="match status" value="1"/>
</dbReference>
<dbReference type="InterPro" id="IPR019342">
    <property type="entry name" value="NADH_UbQ_OxRdtase_FeS-su5"/>
</dbReference>
<dbReference type="PANTHER" id="PTHR15224">
    <property type="entry name" value="NADH DEHYDROGENASE [UBIQUINONE] IRON-SULFUR PROTEIN 5"/>
    <property type="match status" value="1"/>
</dbReference>
<dbReference type="PANTHER" id="PTHR15224:SF7">
    <property type="entry name" value="NADH DEHYDROGENASE [UBIQUINONE] IRON-SULFUR PROTEIN 5-A-RELATED"/>
    <property type="match status" value="1"/>
</dbReference>
<dbReference type="Pfam" id="PF10200">
    <property type="entry name" value="Ndufs5"/>
    <property type="match status" value="1"/>
</dbReference>
<dbReference type="PROSITE" id="PS51808">
    <property type="entry name" value="CHCH"/>
    <property type="match status" value="1"/>
</dbReference>
<protein>
    <recommendedName>
        <fullName>NADH dehydrogenase [ubiquinone] iron-sulfur protein 5-B</fullName>
    </recommendedName>
</protein>
<name>NDS5B_ARATH</name>
<proteinExistence type="evidence at protein level"/>
<organism>
    <name type="scientific">Arabidopsis thaliana</name>
    <name type="common">Mouse-ear cress</name>
    <dbReference type="NCBI Taxonomy" id="3702"/>
    <lineage>
        <taxon>Eukaryota</taxon>
        <taxon>Viridiplantae</taxon>
        <taxon>Streptophyta</taxon>
        <taxon>Embryophyta</taxon>
        <taxon>Tracheophyta</taxon>
        <taxon>Spermatophyta</taxon>
        <taxon>Magnoliopsida</taxon>
        <taxon>eudicotyledons</taxon>
        <taxon>Gunneridae</taxon>
        <taxon>Pentapetalae</taxon>
        <taxon>rosids</taxon>
        <taxon>malvids</taxon>
        <taxon>Brassicales</taxon>
        <taxon>Brassicaceae</taxon>
        <taxon>Camelineae</taxon>
        <taxon>Arabidopsis</taxon>
    </lineage>
</organism>
<gene>
    <name type="ordered locus">At3g62790</name>
    <name type="ORF">F26K9_220</name>
</gene>
<keyword id="KW-0002">3D-structure</keyword>
<keyword id="KW-1015">Disulfide bond</keyword>
<keyword id="KW-0249">Electron transport</keyword>
<keyword id="KW-0472">Membrane</keyword>
<keyword id="KW-0496">Mitochondrion</keyword>
<keyword id="KW-0999">Mitochondrion inner membrane</keyword>
<keyword id="KW-1185">Reference proteome</keyword>
<keyword id="KW-0679">Respiratory chain</keyword>
<keyword id="KW-0813">Transport</keyword>